<reference key="1">
    <citation type="journal article" date="2003" name="Genome Res.">
        <title>Genome sequence of an M3 strain of Streptococcus pyogenes reveals a large-scale genomic rearrangement in invasive strains and new insights into phage evolution.</title>
        <authorList>
            <person name="Nakagawa I."/>
            <person name="Kurokawa K."/>
            <person name="Yamashita A."/>
            <person name="Nakata M."/>
            <person name="Tomiyasu Y."/>
            <person name="Okahashi N."/>
            <person name="Kawabata S."/>
            <person name="Yamazaki K."/>
            <person name="Shiba T."/>
            <person name="Yasunaga T."/>
            <person name="Hayashi H."/>
            <person name="Hattori M."/>
            <person name="Hamada S."/>
        </authorList>
    </citation>
    <scope>NUCLEOTIDE SEQUENCE [LARGE SCALE GENOMIC DNA]</scope>
    <source>
        <strain>SSI-1</strain>
    </source>
</reference>
<feature type="chain" id="PRO_0000411295" description="Carbamoyl phosphate synthase large chain">
    <location>
        <begin position="1"/>
        <end position="1058"/>
    </location>
</feature>
<feature type="domain" description="ATP-grasp 1" evidence="1">
    <location>
        <begin position="133"/>
        <end position="327"/>
    </location>
</feature>
<feature type="domain" description="ATP-grasp 2" evidence="1">
    <location>
        <begin position="671"/>
        <end position="861"/>
    </location>
</feature>
<feature type="domain" description="MGS-like" evidence="1">
    <location>
        <begin position="930"/>
        <end position="1058"/>
    </location>
</feature>
<feature type="region of interest" description="Carboxyphosphate synthetic domain" evidence="1">
    <location>
        <begin position="1"/>
        <end position="401"/>
    </location>
</feature>
<feature type="region of interest" description="Oligomerization domain" evidence="1">
    <location>
        <begin position="402"/>
        <end position="546"/>
    </location>
</feature>
<feature type="region of interest" description="Carbamoyl phosphate synthetic domain" evidence="1">
    <location>
        <begin position="547"/>
        <end position="929"/>
    </location>
</feature>
<feature type="region of interest" description="Allosteric domain" evidence="1">
    <location>
        <begin position="930"/>
        <end position="1058"/>
    </location>
</feature>
<feature type="binding site" evidence="1">
    <location>
        <position position="129"/>
    </location>
    <ligand>
        <name>ATP</name>
        <dbReference type="ChEBI" id="CHEBI:30616"/>
        <label>1</label>
    </ligand>
</feature>
<feature type="binding site" evidence="1">
    <location>
        <position position="169"/>
    </location>
    <ligand>
        <name>ATP</name>
        <dbReference type="ChEBI" id="CHEBI:30616"/>
        <label>1</label>
    </ligand>
</feature>
<feature type="binding site" evidence="1">
    <location>
        <position position="175"/>
    </location>
    <ligand>
        <name>ATP</name>
        <dbReference type="ChEBI" id="CHEBI:30616"/>
        <label>1</label>
    </ligand>
</feature>
<feature type="binding site" evidence="1">
    <location>
        <position position="176"/>
    </location>
    <ligand>
        <name>ATP</name>
        <dbReference type="ChEBI" id="CHEBI:30616"/>
        <label>1</label>
    </ligand>
</feature>
<feature type="binding site" evidence="1">
    <location>
        <position position="208"/>
    </location>
    <ligand>
        <name>ATP</name>
        <dbReference type="ChEBI" id="CHEBI:30616"/>
        <label>1</label>
    </ligand>
</feature>
<feature type="binding site" evidence="1">
    <location>
        <position position="210"/>
    </location>
    <ligand>
        <name>ATP</name>
        <dbReference type="ChEBI" id="CHEBI:30616"/>
        <label>1</label>
    </ligand>
</feature>
<feature type="binding site" evidence="1">
    <location>
        <position position="215"/>
    </location>
    <ligand>
        <name>ATP</name>
        <dbReference type="ChEBI" id="CHEBI:30616"/>
        <label>1</label>
    </ligand>
</feature>
<feature type="binding site" evidence="1">
    <location>
        <position position="241"/>
    </location>
    <ligand>
        <name>ATP</name>
        <dbReference type="ChEBI" id="CHEBI:30616"/>
        <label>1</label>
    </ligand>
</feature>
<feature type="binding site" evidence="1">
    <location>
        <position position="242"/>
    </location>
    <ligand>
        <name>ATP</name>
        <dbReference type="ChEBI" id="CHEBI:30616"/>
        <label>1</label>
    </ligand>
</feature>
<feature type="binding site" evidence="1">
    <location>
        <position position="243"/>
    </location>
    <ligand>
        <name>ATP</name>
        <dbReference type="ChEBI" id="CHEBI:30616"/>
        <label>1</label>
    </ligand>
</feature>
<feature type="binding site" evidence="1">
    <location>
        <position position="284"/>
    </location>
    <ligand>
        <name>ATP</name>
        <dbReference type="ChEBI" id="CHEBI:30616"/>
        <label>1</label>
    </ligand>
</feature>
<feature type="binding site" evidence="1">
    <location>
        <position position="284"/>
    </location>
    <ligand>
        <name>Mg(2+)</name>
        <dbReference type="ChEBI" id="CHEBI:18420"/>
        <label>1</label>
    </ligand>
</feature>
<feature type="binding site" evidence="1">
    <location>
        <position position="284"/>
    </location>
    <ligand>
        <name>Mn(2+)</name>
        <dbReference type="ChEBI" id="CHEBI:29035"/>
        <label>1</label>
    </ligand>
</feature>
<feature type="binding site" evidence="1">
    <location>
        <position position="298"/>
    </location>
    <ligand>
        <name>ATP</name>
        <dbReference type="ChEBI" id="CHEBI:30616"/>
        <label>1</label>
    </ligand>
</feature>
<feature type="binding site" evidence="1">
    <location>
        <position position="298"/>
    </location>
    <ligand>
        <name>Mg(2+)</name>
        <dbReference type="ChEBI" id="CHEBI:18420"/>
        <label>1</label>
    </ligand>
</feature>
<feature type="binding site" evidence="1">
    <location>
        <position position="298"/>
    </location>
    <ligand>
        <name>Mg(2+)</name>
        <dbReference type="ChEBI" id="CHEBI:18420"/>
        <label>2</label>
    </ligand>
</feature>
<feature type="binding site" evidence="1">
    <location>
        <position position="298"/>
    </location>
    <ligand>
        <name>Mn(2+)</name>
        <dbReference type="ChEBI" id="CHEBI:29035"/>
        <label>1</label>
    </ligand>
</feature>
<feature type="binding site" evidence="1">
    <location>
        <position position="298"/>
    </location>
    <ligand>
        <name>Mn(2+)</name>
        <dbReference type="ChEBI" id="CHEBI:29035"/>
        <label>2</label>
    </ligand>
</feature>
<feature type="binding site" evidence="1">
    <location>
        <position position="300"/>
    </location>
    <ligand>
        <name>Mg(2+)</name>
        <dbReference type="ChEBI" id="CHEBI:18420"/>
        <label>2</label>
    </ligand>
</feature>
<feature type="binding site" evidence="1">
    <location>
        <position position="300"/>
    </location>
    <ligand>
        <name>Mn(2+)</name>
        <dbReference type="ChEBI" id="CHEBI:29035"/>
        <label>2</label>
    </ligand>
</feature>
<feature type="binding site" evidence="1">
    <location>
        <position position="707"/>
    </location>
    <ligand>
        <name>ATP</name>
        <dbReference type="ChEBI" id="CHEBI:30616"/>
        <label>2</label>
    </ligand>
</feature>
<feature type="binding site" evidence="1">
    <location>
        <position position="746"/>
    </location>
    <ligand>
        <name>ATP</name>
        <dbReference type="ChEBI" id="CHEBI:30616"/>
        <label>2</label>
    </ligand>
</feature>
<feature type="binding site" evidence="1">
    <location>
        <position position="748"/>
    </location>
    <ligand>
        <name>ATP</name>
        <dbReference type="ChEBI" id="CHEBI:30616"/>
        <label>2</label>
    </ligand>
</feature>
<feature type="binding site" evidence="1">
    <location>
        <position position="752"/>
    </location>
    <ligand>
        <name>ATP</name>
        <dbReference type="ChEBI" id="CHEBI:30616"/>
        <label>2</label>
    </ligand>
</feature>
<feature type="binding site" evidence="1">
    <location>
        <position position="777"/>
    </location>
    <ligand>
        <name>ATP</name>
        <dbReference type="ChEBI" id="CHEBI:30616"/>
        <label>2</label>
    </ligand>
</feature>
<feature type="binding site" evidence="1">
    <location>
        <position position="778"/>
    </location>
    <ligand>
        <name>ATP</name>
        <dbReference type="ChEBI" id="CHEBI:30616"/>
        <label>2</label>
    </ligand>
</feature>
<feature type="binding site" evidence="1">
    <location>
        <position position="779"/>
    </location>
    <ligand>
        <name>ATP</name>
        <dbReference type="ChEBI" id="CHEBI:30616"/>
        <label>2</label>
    </ligand>
</feature>
<feature type="binding site" evidence="1">
    <location>
        <position position="780"/>
    </location>
    <ligand>
        <name>ATP</name>
        <dbReference type="ChEBI" id="CHEBI:30616"/>
        <label>2</label>
    </ligand>
</feature>
<feature type="binding site" evidence="1">
    <location>
        <position position="820"/>
    </location>
    <ligand>
        <name>ATP</name>
        <dbReference type="ChEBI" id="CHEBI:30616"/>
        <label>2</label>
    </ligand>
</feature>
<feature type="binding site" evidence="1">
    <location>
        <position position="820"/>
    </location>
    <ligand>
        <name>Mg(2+)</name>
        <dbReference type="ChEBI" id="CHEBI:18420"/>
        <label>3</label>
    </ligand>
</feature>
<feature type="binding site" evidence="1">
    <location>
        <position position="820"/>
    </location>
    <ligand>
        <name>Mn(2+)</name>
        <dbReference type="ChEBI" id="CHEBI:29035"/>
        <label>3</label>
    </ligand>
</feature>
<feature type="binding site" evidence="1">
    <location>
        <position position="832"/>
    </location>
    <ligand>
        <name>ATP</name>
        <dbReference type="ChEBI" id="CHEBI:30616"/>
        <label>2</label>
    </ligand>
</feature>
<feature type="binding site" evidence="1">
    <location>
        <position position="832"/>
    </location>
    <ligand>
        <name>Mg(2+)</name>
        <dbReference type="ChEBI" id="CHEBI:18420"/>
        <label>3</label>
    </ligand>
</feature>
<feature type="binding site" evidence="1">
    <location>
        <position position="832"/>
    </location>
    <ligand>
        <name>Mg(2+)</name>
        <dbReference type="ChEBI" id="CHEBI:18420"/>
        <label>4</label>
    </ligand>
</feature>
<feature type="binding site" evidence="1">
    <location>
        <position position="832"/>
    </location>
    <ligand>
        <name>Mn(2+)</name>
        <dbReference type="ChEBI" id="CHEBI:29035"/>
        <label>3</label>
    </ligand>
</feature>
<feature type="binding site" evidence="1">
    <location>
        <position position="832"/>
    </location>
    <ligand>
        <name>Mn(2+)</name>
        <dbReference type="ChEBI" id="CHEBI:29035"/>
        <label>4</label>
    </ligand>
</feature>
<feature type="binding site" evidence="1">
    <location>
        <position position="834"/>
    </location>
    <ligand>
        <name>Mg(2+)</name>
        <dbReference type="ChEBI" id="CHEBI:18420"/>
        <label>4</label>
    </ligand>
</feature>
<feature type="binding site" evidence="1">
    <location>
        <position position="834"/>
    </location>
    <ligand>
        <name>Mn(2+)</name>
        <dbReference type="ChEBI" id="CHEBI:29035"/>
        <label>4</label>
    </ligand>
</feature>
<evidence type="ECO:0000255" key="1">
    <source>
        <dbReference type="HAMAP-Rule" id="MF_01210"/>
    </source>
</evidence>
<protein>
    <recommendedName>
        <fullName evidence="1">Carbamoyl phosphate synthase large chain</fullName>
        <ecNumber evidence="1">6.3.4.16</ecNumber>
        <ecNumber evidence="1">6.3.5.5</ecNumber>
    </recommendedName>
    <alternativeName>
        <fullName evidence="1">Carbamoyl phosphate synthetase ammonia chain</fullName>
    </alternativeName>
</protein>
<proteinExistence type="inferred from homology"/>
<gene>
    <name evidence="1" type="primary">carB</name>
    <name type="ordered locus">SPs1292</name>
</gene>
<organism>
    <name type="scientific">Streptococcus pyogenes serotype M3 (strain SSI-1)</name>
    <dbReference type="NCBI Taxonomy" id="193567"/>
    <lineage>
        <taxon>Bacteria</taxon>
        <taxon>Bacillati</taxon>
        <taxon>Bacillota</taxon>
        <taxon>Bacilli</taxon>
        <taxon>Lactobacillales</taxon>
        <taxon>Streptococcaceae</taxon>
        <taxon>Streptococcus</taxon>
    </lineage>
</organism>
<name>CARB_STRPQ</name>
<keyword id="KW-0028">Amino-acid biosynthesis</keyword>
<keyword id="KW-0055">Arginine biosynthesis</keyword>
<keyword id="KW-0067">ATP-binding</keyword>
<keyword id="KW-0436">Ligase</keyword>
<keyword id="KW-0460">Magnesium</keyword>
<keyword id="KW-0464">Manganese</keyword>
<keyword id="KW-0479">Metal-binding</keyword>
<keyword id="KW-0547">Nucleotide-binding</keyword>
<keyword id="KW-0665">Pyrimidine biosynthesis</keyword>
<keyword id="KW-0677">Repeat</keyword>
<sequence>MPKRKDIQKIMVIGSGPIIIGQAAEFDYAGTQACLALKEEGYKVILVNSNPATIMTDKEIADKVYIEPLTLEFVNRIIRKERPDAILPTLGGQTGLNMAMALSKAGILDDLEIELLGTKLSAIDQAEDRDLFKQLMQELDQPIPESTIVKTVDEAVTFARDIGYPVIVRPAFTLGGTGGGICSSEEELCEITENGLKLSPVTQCLIERSIAGFKEIEYEVMRDSADNALVVCNMENFDPVGIHTGDSIVFAPTQTLSDIENQMLRDASLKIIRALKIEGGCNVQLALDPYSFKYYVIEVNPRVSRSSALASKATGYPIAKLAAKIAVGLTLDEMINPITGTTYAMFEPALDYVVAKIPRFPFDKFEHGERQLGTQMKATGEVMAIGRNLEESLLKACRSLEIGVCHNEMTSLSNISDEELVTKVIKAQDDRLFYLSEAIRRGYSIEELESLTKIDLFFLDKLLHIVEIEQELQMHVDHLESLKKAKRYGFSDQKIAEIWQKDESDIRAMRHSHSLYPVYKMVDTCAAEFDAKTPYFYSTYELENESVQSNKESILVLGSGPIRIGQGVEFDYATVHSVKAIQKAGYEAIIMNSNPETVSTDFSVSDKLYFEPLTFEDVMNVIDLEQPKGVIVQFGGQTAINLAQALSEAGVTILGTQVEDLDRAEDRDLFEKALKELGIPQPQGQTATNEEEALEAAKKIGFPVLVRPSYVLGGRAMEIVENKEDLIEYIRTAVKASPEHPILVDSYIFGKECEVDAISEGKSVLIPGIMEHIERAGVHSGDSMAVYPPQQLSKQIQETIAEYTKRLAIGLNCIGMMNVQFVIKNEQVYVIEVNPRASRTVPFLSKVTGIPMAQIATKLILGQTLKDLGYEDGLYPQSQLVHIKAPVFSFTKLAQVDSLLGPEMKSTGEVMGSDTSLEKALYKAFEANNSHLSEFGQIVFTIADDSKAEALSLARRFKAIGYQIMATQGTAAYFAEQGLSACLVGKIGDAANDIPTLVRHGHVQAIVNTVGIKRTADKDGQMIRSSAIEQGVPLFTALDTAKAMLTVLESRCFNIEAI</sequence>
<comment type="function">
    <text evidence="1">Large subunit of the glutamine-dependent carbamoyl phosphate synthetase (CPSase). CPSase catalyzes the formation of carbamoyl phosphate from the ammonia moiety of glutamine, carbonate, and phosphate donated by ATP, constituting the first step of 2 biosynthetic pathways, one leading to arginine and/or urea and the other to pyrimidine nucleotides. The large subunit (synthetase) binds the substrates ammonia (free or transferred from glutamine from the small subunit), hydrogencarbonate and ATP and carries out an ATP-coupled ligase reaction, activating hydrogencarbonate by forming carboxy phosphate which reacts with ammonia to form carbamoyl phosphate.</text>
</comment>
<comment type="catalytic activity">
    <reaction evidence="1">
        <text>hydrogencarbonate + L-glutamine + 2 ATP + H2O = carbamoyl phosphate + L-glutamate + 2 ADP + phosphate + 2 H(+)</text>
        <dbReference type="Rhea" id="RHEA:18633"/>
        <dbReference type="ChEBI" id="CHEBI:15377"/>
        <dbReference type="ChEBI" id="CHEBI:15378"/>
        <dbReference type="ChEBI" id="CHEBI:17544"/>
        <dbReference type="ChEBI" id="CHEBI:29985"/>
        <dbReference type="ChEBI" id="CHEBI:30616"/>
        <dbReference type="ChEBI" id="CHEBI:43474"/>
        <dbReference type="ChEBI" id="CHEBI:58228"/>
        <dbReference type="ChEBI" id="CHEBI:58359"/>
        <dbReference type="ChEBI" id="CHEBI:456216"/>
        <dbReference type="EC" id="6.3.5.5"/>
    </reaction>
</comment>
<comment type="catalytic activity">
    <molecule>Carbamoyl phosphate synthase large chain</molecule>
    <reaction evidence="1">
        <text>hydrogencarbonate + NH4(+) + 2 ATP = carbamoyl phosphate + 2 ADP + phosphate + 2 H(+)</text>
        <dbReference type="Rhea" id="RHEA:18029"/>
        <dbReference type="ChEBI" id="CHEBI:15378"/>
        <dbReference type="ChEBI" id="CHEBI:17544"/>
        <dbReference type="ChEBI" id="CHEBI:28938"/>
        <dbReference type="ChEBI" id="CHEBI:30616"/>
        <dbReference type="ChEBI" id="CHEBI:43474"/>
        <dbReference type="ChEBI" id="CHEBI:58228"/>
        <dbReference type="ChEBI" id="CHEBI:456216"/>
        <dbReference type="EC" id="6.3.4.16"/>
    </reaction>
</comment>
<comment type="cofactor">
    <cofactor evidence="1">
        <name>Mg(2+)</name>
        <dbReference type="ChEBI" id="CHEBI:18420"/>
    </cofactor>
    <cofactor evidence="1">
        <name>Mn(2+)</name>
        <dbReference type="ChEBI" id="CHEBI:29035"/>
    </cofactor>
    <text evidence="1">Binds 4 Mg(2+) or Mn(2+) ions per subunit.</text>
</comment>
<comment type="pathway">
    <text evidence="1">Amino-acid biosynthesis; L-arginine biosynthesis; carbamoyl phosphate from bicarbonate: step 1/1.</text>
</comment>
<comment type="pathway">
    <text evidence="1">Pyrimidine metabolism; UMP biosynthesis via de novo pathway; (S)-dihydroorotate from bicarbonate: step 1/3.</text>
</comment>
<comment type="subunit">
    <text evidence="1">Composed of two chains; the small (or glutamine) chain promotes the hydrolysis of glutamine to ammonia, which is used by the large (or ammonia) chain to synthesize carbamoyl phosphate. Tetramer of heterodimers (alpha,beta)4.</text>
</comment>
<comment type="domain">
    <text evidence="1">The large subunit is composed of 2 ATP-grasp domains that are involved in binding the 2 ATP molecules needed for carbamoyl phosphate synthesis. The N-terminal ATP-grasp domain (referred to as the carboxyphosphate synthetic component) catalyzes the ATP-dependent phosphorylation of hydrogencarbonate to carboxyphosphate and the subsequent nucleophilic attack by ammonia to form a carbamate intermediate. The C-terminal ATP-grasp domain (referred to as the carbamoyl phosphate synthetic component) then catalyzes the phosphorylation of carbamate with the second ATP to form the end product carbamoyl phosphate. The reactive and unstable enzyme intermediates are sequentially channeled from one active site to the next through the interior of the protein over a distance of at least 96 A.</text>
</comment>
<comment type="similarity">
    <text evidence="1">Belongs to the CarB family.</text>
</comment>
<dbReference type="EC" id="6.3.4.16" evidence="1"/>
<dbReference type="EC" id="6.3.5.5" evidence="1"/>
<dbReference type="EMBL" id="BA000034">
    <property type="protein sequence ID" value="BAC64387.1"/>
    <property type="molecule type" value="Genomic_DNA"/>
</dbReference>
<dbReference type="RefSeq" id="WP_011106824.1">
    <property type="nucleotide sequence ID" value="NC_004606.1"/>
</dbReference>
<dbReference type="SMR" id="P0DA15"/>
<dbReference type="KEGG" id="sps:SPs1292"/>
<dbReference type="HOGENOM" id="CLU_000513_1_3_9"/>
<dbReference type="UniPathway" id="UPA00068">
    <property type="reaction ID" value="UER00171"/>
</dbReference>
<dbReference type="UniPathway" id="UPA00070">
    <property type="reaction ID" value="UER00115"/>
</dbReference>
<dbReference type="GO" id="GO:0005737">
    <property type="term" value="C:cytoplasm"/>
    <property type="evidence" value="ECO:0007669"/>
    <property type="project" value="TreeGrafter"/>
</dbReference>
<dbReference type="GO" id="GO:0005524">
    <property type="term" value="F:ATP binding"/>
    <property type="evidence" value="ECO:0007669"/>
    <property type="project" value="UniProtKB-UniRule"/>
</dbReference>
<dbReference type="GO" id="GO:0004087">
    <property type="term" value="F:carbamoyl-phosphate synthase (ammonia) activity"/>
    <property type="evidence" value="ECO:0007669"/>
    <property type="project" value="RHEA"/>
</dbReference>
<dbReference type="GO" id="GO:0004088">
    <property type="term" value="F:carbamoyl-phosphate synthase (glutamine-hydrolyzing) activity"/>
    <property type="evidence" value="ECO:0007669"/>
    <property type="project" value="UniProtKB-UniRule"/>
</dbReference>
<dbReference type="GO" id="GO:0046872">
    <property type="term" value="F:metal ion binding"/>
    <property type="evidence" value="ECO:0007669"/>
    <property type="project" value="UniProtKB-KW"/>
</dbReference>
<dbReference type="GO" id="GO:0044205">
    <property type="term" value="P:'de novo' UMP biosynthetic process"/>
    <property type="evidence" value="ECO:0007669"/>
    <property type="project" value="UniProtKB-UniRule"/>
</dbReference>
<dbReference type="GO" id="GO:0006541">
    <property type="term" value="P:glutamine metabolic process"/>
    <property type="evidence" value="ECO:0007669"/>
    <property type="project" value="TreeGrafter"/>
</dbReference>
<dbReference type="GO" id="GO:0006526">
    <property type="term" value="P:L-arginine biosynthetic process"/>
    <property type="evidence" value="ECO:0007669"/>
    <property type="project" value="UniProtKB-UniRule"/>
</dbReference>
<dbReference type="CDD" id="cd01424">
    <property type="entry name" value="MGS_CPS_II"/>
    <property type="match status" value="1"/>
</dbReference>
<dbReference type="FunFam" id="1.10.1030.10:FF:000002">
    <property type="entry name" value="Carbamoyl-phosphate synthase large chain"/>
    <property type="match status" value="1"/>
</dbReference>
<dbReference type="FunFam" id="3.30.1490.20:FF:000001">
    <property type="entry name" value="Carbamoyl-phosphate synthase large chain"/>
    <property type="match status" value="1"/>
</dbReference>
<dbReference type="FunFam" id="3.30.470.20:FF:000001">
    <property type="entry name" value="Carbamoyl-phosphate synthase large chain"/>
    <property type="match status" value="1"/>
</dbReference>
<dbReference type="FunFam" id="3.30.470.20:FF:000026">
    <property type="entry name" value="Carbamoyl-phosphate synthase large chain"/>
    <property type="match status" value="1"/>
</dbReference>
<dbReference type="FunFam" id="3.40.50.20:FF:000001">
    <property type="entry name" value="Carbamoyl-phosphate synthase large chain"/>
    <property type="match status" value="2"/>
</dbReference>
<dbReference type="Gene3D" id="3.40.50.20">
    <property type="match status" value="2"/>
</dbReference>
<dbReference type="Gene3D" id="3.30.1490.20">
    <property type="entry name" value="ATP-grasp fold, A domain"/>
    <property type="match status" value="1"/>
</dbReference>
<dbReference type="Gene3D" id="3.30.470.20">
    <property type="entry name" value="ATP-grasp fold, B domain"/>
    <property type="match status" value="2"/>
</dbReference>
<dbReference type="Gene3D" id="1.10.1030.10">
    <property type="entry name" value="Carbamoyl-phosphate synthetase, large subunit oligomerisation domain"/>
    <property type="match status" value="1"/>
</dbReference>
<dbReference type="Gene3D" id="3.40.50.1380">
    <property type="entry name" value="Methylglyoxal synthase-like domain"/>
    <property type="match status" value="1"/>
</dbReference>
<dbReference type="HAMAP" id="MF_01210_A">
    <property type="entry name" value="CPSase_L_chain_A"/>
    <property type="match status" value="1"/>
</dbReference>
<dbReference type="HAMAP" id="MF_01210_B">
    <property type="entry name" value="CPSase_L_chain_B"/>
    <property type="match status" value="1"/>
</dbReference>
<dbReference type="InterPro" id="IPR011761">
    <property type="entry name" value="ATP-grasp"/>
</dbReference>
<dbReference type="InterPro" id="IPR013815">
    <property type="entry name" value="ATP_grasp_subdomain_1"/>
</dbReference>
<dbReference type="InterPro" id="IPR006275">
    <property type="entry name" value="CarbamoylP_synth_lsu"/>
</dbReference>
<dbReference type="InterPro" id="IPR005480">
    <property type="entry name" value="CarbamoylP_synth_lsu_oligo"/>
</dbReference>
<dbReference type="InterPro" id="IPR036897">
    <property type="entry name" value="CarbamoylP_synth_lsu_oligo_sf"/>
</dbReference>
<dbReference type="InterPro" id="IPR005479">
    <property type="entry name" value="CbamoylP_synth_lsu-like_ATP-bd"/>
</dbReference>
<dbReference type="InterPro" id="IPR005483">
    <property type="entry name" value="CbamoylP_synth_lsu_CPSase_dom"/>
</dbReference>
<dbReference type="InterPro" id="IPR011607">
    <property type="entry name" value="MGS-like_dom"/>
</dbReference>
<dbReference type="InterPro" id="IPR036914">
    <property type="entry name" value="MGS-like_dom_sf"/>
</dbReference>
<dbReference type="InterPro" id="IPR033937">
    <property type="entry name" value="MGS_CPS_CarB"/>
</dbReference>
<dbReference type="InterPro" id="IPR016185">
    <property type="entry name" value="PreATP-grasp_dom_sf"/>
</dbReference>
<dbReference type="NCBIfam" id="TIGR01369">
    <property type="entry name" value="CPSaseII_lrg"/>
    <property type="match status" value="1"/>
</dbReference>
<dbReference type="NCBIfam" id="NF003671">
    <property type="entry name" value="PRK05294.1"/>
    <property type="match status" value="1"/>
</dbReference>
<dbReference type="NCBIfam" id="NF009455">
    <property type="entry name" value="PRK12815.1"/>
    <property type="match status" value="1"/>
</dbReference>
<dbReference type="PANTHER" id="PTHR11405:SF53">
    <property type="entry name" value="CARBAMOYL-PHOSPHATE SYNTHASE [AMMONIA], MITOCHONDRIAL"/>
    <property type="match status" value="1"/>
</dbReference>
<dbReference type="PANTHER" id="PTHR11405">
    <property type="entry name" value="CARBAMOYLTRANSFERASE FAMILY MEMBER"/>
    <property type="match status" value="1"/>
</dbReference>
<dbReference type="Pfam" id="PF02786">
    <property type="entry name" value="CPSase_L_D2"/>
    <property type="match status" value="2"/>
</dbReference>
<dbReference type="Pfam" id="PF02787">
    <property type="entry name" value="CPSase_L_D3"/>
    <property type="match status" value="1"/>
</dbReference>
<dbReference type="Pfam" id="PF02142">
    <property type="entry name" value="MGS"/>
    <property type="match status" value="1"/>
</dbReference>
<dbReference type="PRINTS" id="PR00098">
    <property type="entry name" value="CPSASE"/>
</dbReference>
<dbReference type="SMART" id="SM01096">
    <property type="entry name" value="CPSase_L_D3"/>
    <property type="match status" value="1"/>
</dbReference>
<dbReference type="SMART" id="SM01209">
    <property type="entry name" value="GARS_A"/>
    <property type="match status" value="1"/>
</dbReference>
<dbReference type="SMART" id="SM00851">
    <property type="entry name" value="MGS"/>
    <property type="match status" value="1"/>
</dbReference>
<dbReference type="SUPFAM" id="SSF48108">
    <property type="entry name" value="Carbamoyl phosphate synthetase, large subunit connection domain"/>
    <property type="match status" value="1"/>
</dbReference>
<dbReference type="SUPFAM" id="SSF56059">
    <property type="entry name" value="Glutathione synthetase ATP-binding domain-like"/>
    <property type="match status" value="2"/>
</dbReference>
<dbReference type="SUPFAM" id="SSF52335">
    <property type="entry name" value="Methylglyoxal synthase-like"/>
    <property type="match status" value="1"/>
</dbReference>
<dbReference type="SUPFAM" id="SSF52440">
    <property type="entry name" value="PreATP-grasp domain"/>
    <property type="match status" value="2"/>
</dbReference>
<dbReference type="PROSITE" id="PS50975">
    <property type="entry name" value="ATP_GRASP"/>
    <property type="match status" value="2"/>
</dbReference>
<dbReference type="PROSITE" id="PS00866">
    <property type="entry name" value="CPSASE_1"/>
    <property type="match status" value="2"/>
</dbReference>
<dbReference type="PROSITE" id="PS00867">
    <property type="entry name" value="CPSASE_2"/>
    <property type="match status" value="2"/>
</dbReference>
<dbReference type="PROSITE" id="PS51855">
    <property type="entry name" value="MGS"/>
    <property type="match status" value="1"/>
</dbReference>
<accession>P0DA15</accession>
<accession>Q8K7Y3</accession>